<gene>
    <name type="primary">ncbp2</name>
    <name type="synonym">cbp20</name>
</gene>
<dbReference type="EMBL" id="BC072902">
    <property type="protein sequence ID" value="AAH72902.1"/>
    <property type="molecule type" value="mRNA"/>
</dbReference>
<dbReference type="EMBL" id="X84788">
    <property type="protein sequence ID" value="CAA59259.1"/>
    <property type="molecule type" value="mRNA"/>
</dbReference>
<dbReference type="PIR" id="I51602">
    <property type="entry name" value="I51602"/>
</dbReference>
<dbReference type="RefSeq" id="NP_001167476.1">
    <property type="nucleotide sequence ID" value="NM_001174005.1"/>
</dbReference>
<dbReference type="SMR" id="P52299"/>
<dbReference type="BioGRID" id="1079029">
    <property type="interactions" value="1"/>
</dbReference>
<dbReference type="IntAct" id="P52299">
    <property type="interactions" value="1"/>
</dbReference>
<dbReference type="DNASU" id="100380998"/>
<dbReference type="GeneID" id="100380998"/>
<dbReference type="KEGG" id="xla:100380998"/>
<dbReference type="AGR" id="Xenbase:XB-GENE-1005792"/>
<dbReference type="CTD" id="100380998"/>
<dbReference type="Xenbase" id="XB-GENE-1005792">
    <property type="gene designation" value="ncbp2.L"/>
</dbReference>
<dbReference type="OMA" id="TKCASPE"/>
<dbReference type="OrthoDB" id="201398at2759"/>
<dbReference type="Proteomes" id="UP000186698">
    <property type="component" value="Chromosome 5L"/>
</dbReference>
<dbReference type="Bgee" id="100380998">
    <property type="expression patterns" value="Expressed in egg cell and 19 other cell types or tissues"/>
</dbReference>
<dbReference type="GO" id="GO:0005737">
    <property type="term" value="C:cytoplasm"/>
    <property type="evidence" value="ECO:0000250"/>
    <property type="project" value="UniProtKB"/>
</dbReference>
<dbReference type="GO" id="GO:0005846">
    <property type="term" value="C:nuclear cap binding complex"/>
    <property type="evidence" value="ECO:0000250"/>
    <property type="project" value="UniProtKB"/>
</dbReference>
<dbReference type="GO" id="GO:0005654">
    <property type="term" value="C:nucleoplasm"/>
    <property type="evidence" value="ECO:0000250"/>
    <property type="project" value="UniProtKB"/>
</dbReference>
<dbReference type="GO" id="GO:0005634">
    <property type="term" value="C:nucleus"/>
    <property type="evidence" value="ECO:0000250"/>
    <property type="project" value="UniProtKB"/>
</dbReference>
<dbReference type="GO" id="GO:0003729">
    <property type="term" value="F:mRNA binding"/>
    <property type="evidence" value="ECO:0000250"/>
    <property type="project" value="UniProtKB"/>
</dbReference>
<dbReference type="GO" id="GO:0000340">
    <property type="term" value="F:RNA 7-methylguanosine cap binding"/>
    <property type="evidence" value="ECO:0000250"/>
    <property type="project" value="UniProtKB"/>
</dbReference>
<dbReference type="GO" id="GO:0000339">
    <property type="term" value="F:RNA cap binding"/>
    <property type="evidence" value="ECO:0000318"/>
    <property type="project" value="GO_Central"/>
</dbReference>
<dbReference type="GO" id="GO:0017069">
    <property type="term" value="F:snRNA binding"/>
    <property type="evidence" value="ECO:0000250"/>
    <property type="project" value="UniProtKB"/>
</dbReference>
<dbReference type="GO" id="GO:0045292">
    <property type="term" value="P:mRNA cis splicing, via spliceosome"/>
    <property type="evidence" value="ECO:0000250"/>
    <property type="project" value="UniProtKB"/>
</dbReference>
<dbReference type="GO" id="GO:0000398">
    <property type="term" value="P:mRNA splicing, via spliceosome"/>
    <property type="evidence" value="ECO:0000318"/>
    <property type="project" value="GO_Central"/>
</dbReference>
<dbReference type="GO" id="GO:0051028">
    <property type="term" value="P:mRNA transport"/>
    <property type="evidence" value="ECO:0007669"/>
    <property type="project" value="UniProtKB-KW"/>
</dbReference>
<dbReference type="GO" id="GO:0000184">
    <property type="term" value="P:nuclear-transcribed mRNA catabolic process, nonsense-mediated decay"/>
    <property type="evidence" value="ECO:0000250"/>
    <property type="project" value="UniProtKB"/>
</dbReference>
<dbReference type="GO" id="GO:0046833">
    <property type="term" value="P:positive regulation of RNA export from nucleus"/>
    <property type="evidence" value="ECO:0000314"/>
    <property type="project" value="UniProtKB"/>
</dbReference>
<dbReference type="GO" id="GO:0006446">
    <property type="term" value="P:regulation of translational initiation"/>
    <property type="evidence" value="ECO:0000250"/>
    <property type="project" value="UniProtKB"/>
</dbReference>
<dbReference type="GO" id="GO:0031047">
    <property type="term" value="P:regulatory ncRNA-mediated gene silencing"/>
    <property type="evidence" value="ECO:0007669"/>
    <property type="project" value="UniProtKB-KW"/>
</dbReference>
<dbReference type="GO" id="GO:0008380">
    <property type="term" value="P:RNA splicing"/>
    <property type="evidence" value="ECO:0000314"/>
    <property type="project" value="UniProtKB"/>
</dbReference>
<dbReference type="GO" id="GO:0006408">
    <property type="term" value="P:snRNA export from nucleus"/>
    <property type="evidence" value="ECO:0000314"/>
    <property type="project" value="UniProtKB"/>
</dbReference>
<dbReference type="CDD" id="cd12240">
    <property type="entry name" value="RRM_NCBP2"/>
    <property type="match status" value="1"/>
</dbReference>
<dbReference type="FunFam" id="3.30.70.330:FF:000128">
    <property type="entry name" value="Nuclear cap-binding protein subunit 2"/>
    <property type="match status" value="1"/>
</dbReference>
<dbReference type="Gene3D" id="3.30.70.330">
    <property type="match status" value="1"/>
</dbReference>
<dbReference type="InterPro" id="IPR027157">
    <property type="entry name" value="NCBP2"/>
</dbReference>
<dbReference type="InterPro" id="IPR034148">
    <property type="entry name" value="NCBP2_RRM"/>
</dbReference>
<dbReference type="InterPro" id="IPR012677">
    <property type="entry name" value="Nucleotide-bd_a/b_plait_sf"/>
</dbReference>
<dbReference type="InterPro" id="IPR035979">
    <property type="entry name" value="RBD_domain_sf"/>
</dbReference>
<dbReference type="InterPro" id="IPR000504">
    <property type="entry name" value="RRM_dom"/>
</dbReference>
<dbReference type="PANTHER" id="PTHR18847">
    <property type="entry name" value="20 KD NUCLEAR CAP BINDING PROTEIN"/>
    <property type="match status" value="1"/>
</dbReference>
<dbReference type="PANTHER" id="PTHR18847:SF0">
    <property type="entry name" value="NUCLEAR CAP-BINDING PROTEIN SUBUNIT 2"/>
    <property type="match status" value="1"/>
</dbReference>
<dbReference type="Pfam" id="PF00076">
    <property type="entry name" value="RRM_1"/>
    <property type="match status" value="1"/>
</dbReference>
<dbReference type="SMART" id="SM00360">
    <property type="entry name" value="RRM"/>
    <property type="match status" value="1"/>
</dbReference>
<dbReference type="SUPFAM" id="SSF54928">
    <property type="entry name" value="RNA-binding domain, RBD"/>
    <property type="match status" value="1"/>
</dbReference>
<dbReference type="PROSITE" id="PS50102">
    <property type="entry name" value="RRM"/>
    <property type="match status" value="1"/>
</dbReference>
<reference key="1">
    <citation type="submission" date="2004-06" db="EMBL/GenBank/DDBJ databases">
        <authorList>
            <consortium name="NIH - Xenopus Gene Collection (XGC) project"/>
        </authorList>
    </citation>
    <scope>NUCLEOTIDE SEQUENCE [LARGE SCALE MRNA]</scope>
    <source>
        <tissue>Ovary</tissue>
    </source>
</reference>
<reference key="2">
    <citation type="journal article" date="1995" name="Nature">
        <title>A cap-binding protein complex mediating U snRNA export.</title>
        <authorList>
            <person name="Izaurralde E."/>
            <person name="Lewis J."/>
            <person name="Gamberi C."/>
            <person name="Jarmolowski A."/>
            <person name="McGuigan C."/>
            <person name="Mattaj A.W."/>
        </authorList>
    </citation>
    <scope>NUCLEOTIDE SEQUENCE [MRNA] OF 6-153</scope>
    <scope>FUNCTION</scope>
    <source>
        <tissue>Kidney epithelium</tissue>
    </source>
</reference>
<feature type="chain" id="PRO_0000081501" description="Nuclear cap-binding protein subunit 2">
    <location>
        <begin position="1"/>
        <end position="153"/>
    </location>
</feature>
<feature type="domain" description="RRM" evidence="3">
    <location>
        <begin position="37"/>
        <end position="115"/>
    </location>
</feature>
<feature type="binding site" evidence="1">
    <location>
        <position position="17"/>
    </location>
    <ligand>
        <name>mRNA</name>
        <dbReference type="ChEBI" id="CHEBI:33699"/>
    </ligand>
    <ligandPart>
        <name>mRNA cap</name>
    </ligandPart>
</feature>
<feature type="binding site" evidence="1">
    <location>
        <position position="40"/>
    </location>
    <ligand>
        <name>mRNA</name>
        <dbReference type="ChEBI" id="CHEBI:33699"/>
    </ligand>
    <ligandPart>
        <name>mRNA cap</name>
    </ligandPart>
</feature>
<feature type="binding site" evidence="1">
    <location>
        <begin position="109"/>
        <end position="113"/>
    </location>
    <ligand>
        <name>mRNA</name>
        <dbReference type="ChEBI" id="CHEBI:33699"/>
    </ligand>
    <ligandPart>
        <name>mRNA cap</name>
    </ligandPart>
</feature>
<feature type="binding site" evidence="1">
    <location>
        <begin position="120"/>
        <end position="124"/>
    </location>
    <ligand>
        <name>mRNA</name>
        <dbReference type="ChEBI" id="CHEBI:33699"/>
    </ligand>
    <ligandPart>
        <name>mRNA cap</name>
    </ligandPart>
</feature>
<feature type="binding site" evidence="1">
    <location>
        <begin position="130"/>
        <end position="131"/>
    </location>
    <ligand>
        <name>mRNA</name>
        <dbReference type="ChEBI" id="CHEBI:33699"/>
    </ligand>
    <ligandPart>
        <name>mRNA cap</name>
    </ligandPart>
</feature>
<feature type="sequence conflict" description="In Ref. 2; CAA59259." evidence="4" ref="2">
    <original>LRS</original>
    <variation>ARG</variation>
    <location>
        <begin position="6"/>
        <end position="8"/>
    </location>
</feature>
<feature type="sequence conflict" description="In Ref. 2; CAA59259." evidence="4" ref="2">
    <original>EQ</original>
    <variation>GT</variation>
    <location>
        <begin position="92"/>
        <end position="93"/>
    </location>
</feature>
<accession>P52299</accession>
<accession>Q6GQ46</accession>
<evidence type="ECO:0000250" key="1"/>
<evidence type="ECO:0000250" key="2">
    <source>
        <dbReference type="UniProtKB" id="P52298"/>
    </source>
</evidence>
<evidence type="ECO:0000255" key="3">
    <source>
        <dbReference type="PROSITE-ProRule" id="PRU00176"/>
    </source>
</evidence>
<evidence type="ECO:0000305" key="4"/>
<proteinExistence type="evidence at transcript level"/>
<organism>
    <name type="scientific">Xenopus laevis</name>
    <name type="common">African clawed frog</name>
    <dbReference type="NCBI Taxonomy" id="8355"/>
    <lineage>
        <taxon>Eukaryota</taxon>
        <taxon>Metazoa</taxon>
        <taxon>Chordata</taxon>
        <taxon>Craniata</taxon>
        <taxon>Vertebrata</taxon>
        <taxon>Euteleostomi</taxon>
        <taxon>Amphibia</taxon>
        <taxon>Batrachia</taxon>
        <taxon>Anura</taxon>
        <taxon>Pipoidea</taxon>
        <taxon>Pipidae</taxon>
        <taxon>Xenopodinae</taxon>
        <taxon>Xenopus</taxon>
        <taxon>Xenopus</taxon>
    </lineage>
</organism>
<protein>
    <recommendedName>
        <fullName>Nuclear cap-binding protein subunit 2</fullName>
    </recommendedName>
    <alternativeName>
        <fullName>20 kDa nuclear cap-binding protein</fullName>
    </alternativeName>
    <alternativeName>
        <fullName>NCBP 20 kDa subunit</fullName>
        <shortName>CBP20</shortName>
    </alternativeName>
</protein>
<comment type="function">
    <text evidence="2">Component of the cap-binding complex (CBC), which binds co-transcriptionally to the 5' cap of pre-mRNAs and is involved in various processes such as pre-mRNA splicing, translation regulation, nonsense-mediated mRNA decay, RNA-mediated gene silencing (RNAi) by microRNAs (miRNAs) and mRNA export. The CBC complex is involved in mRNA export from the nucleus, leading to the recruitment of the mRNA export machinery to the 5' end of mRNA and to mRNA export in a 5' to 3' direction through the nuclear pore. The CBC complex is also involved in mediating U snRNA and intronless mRNAs export from the nucleus. The CBC complex is essential for a pioneer round of mRNA translation, before steady state translation when the CBC complex is replaced by cytoplasmic cap-binding protein eIF4E. The pioneer round of mRNA translation mediated by the CBC complex plays a central role in nonsense-mediated mRNA decay (NMD), NMD only taking place in mRNAs bound to the CBC complex, but not on eIF4E-bound mRNAs. The CBC complex enhances NMD in mRNAs containing at least one exon-junction complex (EJC), promoting the interaction between upf1 and upf2. The CBC complex is also involved in 'failsafe' NMD, which is independent of the EJC complex, while it does not participate in Staufen-mediated mRNA decay (SMD). During cell proliferation, the CBC complex is also involved in microRNAs (miRNAs) biogenesis via its interaction with srrt/ars2, thereby being required for miRNA-mediated RNA interference. The CBC complex also acts as a negative regulator of parn, thereby acting as an inhibitor of mRNA deadenylation. In the CBC complex, ncbp2/cbp20 recognizes and binds capped RNAs (m7GpppG-capped RNA) but requires ncbp1/cbp80 to stabilize the movement of its N-terminal loop and lock the CBC into a high affinity cap-binding state with the cap structure. The conventional cap-binding complex with NCBP2 binds both small nuclear RNA (snRNA) and messenger (mRNA) and is involved in their export from the nucleus (By similarity).</text>
</comment>
<comment type="subunit">
    <text evidence="2">Component of the nuclear cap-binding complex (CBC), a heterodimer composed of ncbp1/cbp80 and ncbp2/cbp20 that interacts with m7GpppG-capped RNA.</text>
</comment>
<comment type="subcellular location">
    <subcellularLocation>
        <location evidence="2">Nucleus</location>
    </subcellularLocation>
    <subcellularLocation>
        <location evidence="2">Cytoplasm</location>
    </subcellularLocation>
</comment>
<comment type="similarity">
    <text evidence="4">Belongs to the RRM NCBP2 family.</text>
</comment>
<sequence length="153" mass="17565">MALSALRSDSYVDLSQYRDQHFRGNRSDQESLLKQSCTLYVGNLSFYTTEEQIHELFSKSGDVKRIVMGLDKVKKTACGFCFVEYYTRADAEQAMRFINGTRLDDRIVRTDWDAGFKEGRQYGRGKSGGQVRDEYRQDYDAGRGGYGKVVQSF</sequence>
<name>NCBP2_XENLA</name>
<keyword id="KW-0963">Cytoplasm</keyword>
<keyword id="KW-0507">mRNA processing</keyword>
<keyword id="KW-0508">mRNA splicing</keyword>
<keyword id="KW-0509">mRNA transport</keyword>
<keyword id="KW-0866">Nonsense-mediated mRNA decay</keyword>
<keyword id="KW-0539">Nucleus</keyword>
<keyword id="KW-1185">Reference proteome</keyword>
<keyword id="KW-0694">RNA-binding</keyword>
<keyword id="KW-0943">RNA-mediated gene silencing</keyword>
<keyword id="KW-0810">Translation regulation</keyword>
<keyword id="KW-0813">Transport</keyword>